<keyword id="KW-0963">Cytoplasm</keyword>
<keyword id="KW-1185">Reference proteome</keyword>
<keyword id="KW-0694">RNA-binding</keyword>
<sequence>MAKKPDTSSRIADNKKAAYNYFFEERYEAGLVLHGWEVKALREGKVQLTDGYVIIKDGELFLIGCQINPLKTASTHVSPDAARIKKLLMHKDEIRRLIGKVEQKGYTLVPLNLHWKDGRAKCEIALAKGKAEHDKRDTIKEREGKREVERVMKSRHR</sequence>
<proteinExistence type="inferred from homology"/>
<protein>
    <recommendedName>
        <fullName evidence="1">SsrA-binding protein</fullName>
    </recommendedName>
    <alternativeName>
        <fullName evidence="1">Small protein B</fullName>
    </alternativeName>
</protein>
<comment type="function">
    <text evidence="1">Required for rescue of stalled ribosomes mediated by trans-translation. Binds to transfer-messenger RNA (tmRNA), required for stable association of tmRNA with ribosomes. tmRNA and SmpB together mimic tRNA shape, replacing the anticodon stem-loop with SmpB. tmRNA is encoded by the ssrA gene; the 2 termini fold to resemble tRNA(Ala) and it encodes a 'tag peptide', a short internal open reading frame. During trans-translation Ala-aminoacylated tmRNA acts like a tRNA, entering the A-site of stalled ribosomes, displacing the stalled mRNA. The ribosome then switches to translate the ORF on the tmRNA; the nascent peptide is terminated with the 'tag peptide' encoded by the tmRNA and targeted for degradation. The ribosome is freed to recommence translation, which seems to be the essential function of trans-translation.</text>
</comment>
<comment type="subcellular location">
    <subcellularLocation>
        <location evidence="1">Cytoplasm</location>
    </subcellularLocation>
    <text evidence="1">The tmRNA-SmpB complex associates with stalled 70S ribosomes.</text>
</comment>
<comment type="similarity">
    <text evidence="1">Belongs to the SmpB family.</text>
</comment>
<feature type="chain" id="PRO_1000116861" description="SsrA-binding protein">
    <location>
        <begin position="1"/>
        <end position="157"/>
    </location>
</feature>
<feature type="region of interest" description="Disordered" evidence="2">
    <location>
        <begin position="130"/>
        <end position="157"/>
    </location>
</feature>
<organism>
    <name type="scientific">Acidovorax ebreus (strain TPSY)</name>
    <name type="common">Diaphorobacter sp. (strain TPSY)</name>
    <dbReference type="NCBI Taxonomy" id="535289"/>
    <lineage>
        <taxon>Bacteria</taxon>
        <taxon>Pseudomonadati</taxon>
        <taxon>Pseudomonadota</taxon>
        <taxon>Betaproteobacteria</taxon>
        <taxon>Burkholderiales</taxon>
        <taxon>Comamonadaceae</taxon>
        <taxon>Diaphorobacter</taxon>
    </lineage>
</organism>
<dbReference type="EMBL" id="CP001392">
    <property type="protein sequence ID" value="ACM32723.1"/>
    <property type="molecule type" value="Genomic_DNA"/>
</dbReference>
<dbReference type="RefSeq" id="WP_011805747.1">
    <property type="nucleotide sequence ID" value="NC_011992.1"/>
</dbReference>
<dbReference type="SMR" id="B9MGQ0"/>
<dbReference type="GeneID" id="84681997"/>
<dbReference type="KEGG" id="dia:Dtpsy_1256"/>
<dbReference type="eggNOG" id="COG0691">
    <property type="taxonomic scope" value="Bacteria"/>
</dbReference>
<dbReference type="HOGENOM" id="CLU_108953_3_0_4"/>
<dbReference type="Proteomes" id="UP000000450">
    <property type="component" value="Chromosome"/>
</dbReference>
<dbReference type="GO" id="GO:0005829">
    <property type="term" value="C:cytosol"/>
    <property type="evidence" value="ECO:0007669"/>
    <property type="project" value="TreeGrafter"/>
</dbReference>
<dbReference type="GO" id="GO:0003723">
    <property type="term" value="F:RNA binding"/>
    <property type="evidence" value="ECO:0007669"/>
    <property type="project" value="UniProtKB-UniRule"/>
</dbReference>
<dbReference type="GO" id="GO:0070929">
    <property type="term" value="P:trans-translation"/>
    <property type="evidence" value="ECO:0007669"/>
    <property type="project" value="UniProtKB-UniRule"/>
</dbReference>
<dbReference type="CDD" id="cd09294">
    <property type="entry name" value="SmpB"/>
    <property type="match status" value="1"/>
</dbReference>
<dbReference type="Gene3D" id="2.40.280.10">
    <property type="match status" value="1"/>
</dbReference>
<dbReference type="HAMAP" id="MF_00023">
    <property type="entry name" value="SmpB"/>
    <property type="match status" value="1"/>
</dbReference>
<dbReference type="InterPro" id="IPR023620">
    <property type="entry name" value="SmpB"/>
</dbReference>
<dbReference type="InterPro" id="IPR000037">
    <property type="entry name" value="SsrA-bd_prot"/>
</dbReference>
<dbReference type="InterPro" id="IPR020081">
    <property type="entry name" value="SsrA-bd_prot_CS"/>
</dbReference>
<dbReference type="NCBIfam" id="NF003843">
    <property type="entry name" value="PRK05422.1"/>
    <property type="match status" value="1"/>
</dbReference>
<dbReference type="NCBIfam" id="TIGR00086">
    <property type="entry name" value="smpB"/>
    <property type="match status" value="1"/>
</dbReference>
<dbReference type="PANTHER" id="PTHR30308:SF2">
    <property type="entry name" value="SSRA-BINDING PROTEIN"/>
    <property type="match status" value="1"/>
</dbReference>
<dbReference type="PANTHER" id="PTHR30308">
    <property type="entry name" value="TMRNA-BINDING COMPONENT OF TRANS-TRANSLATION TAGGING COMPLEX"/>
    <property type="match status" value="1"/>
</dbReference>
<dbReference type="Pfam" id="PF01668">
    <property type="entry name" value="SmpB"/>
    <property type="match status" value="1"/>
</dbReference>
<dbReference type="SUPFAM" id="SSF74982">
    <property type="entry name" value="Small protein B (SmpB)"/>
    <property type="match status" value="1"/>
</dbReference>
<dbReference type="PROSITE" id="PS01317">
    <property type="entry name" value="SSRP"/>
    <property type="match status" value="1"/>
</dbReference>
<gene>
    <name evidence="1" type="primary">smpB</name>
    <name type="ordered locus">Dtpsy_1256</name>
</gene>
<accession>B9MGQ0</accession>
<name>SSRP_ACIET</name>
<reference key="1">
    <citation type="submission" date="2009-01" db="EMBL/GenBank/DDBJ databases">
        <title>Complete sequence of Diaphorobacter sp. TPSY.</title>
        <authorList>
            <consortium name="US DOE Joint Genome Institute"/>
            <person name="Lucas S."/>
            <person name="Copeland A."/>
            <person name="Lapidus A."/>
            <person name="Glavina del Rio T."/>
            <person name="Tice H."/>
            <person name="Bruce D."/>
            <person name="Goodwin L."/>
            <person name="Pitluck S."/>
            <person name="Chertkov O."/>
            <person name="Brettin T."/>
            <person name="Detter J.C."/>
            <person name="Han C."/>
            <person name="Larimer F."/>
            <person name="Land M."/>
            <person name="Hauser L."/>
            <person name="Kyrpides N."/>
            <person name="Mikhailova N."/>
            <person name="Coates J.D."/>
        </authorList>
    </citation>
    <scope>NUCLEOTIDE SEQUENCE [LARGE SCALE GENOMIC DNA]</scope>
    <source>
        <strain>TPSY</strain>
    </source>
</reference>
<evidence type="ECO:0000255" key="1">
    <source>
        <dbReference type="HAMAP-Rule" id="MF_00023"/>
    </source>
</evidence>
<evidence type="ECO:0000256" key="2">
    <source>
        <dbReference type="SAM" id="MobiDB-lite"/>
    </source>
</evidence>